<accession>A4IT42</accession>
<gene>
    <name type="primary">nbaI</name>
    <name type="ordered locus">GTNG_3151</name>
</gene>
<dbReference type="EC" id="4.1.3.39" evidence="1"/>
<dbReference type="EMBL" id="CP000557">
    <property type="protein sequence ID" value="ABO68496.1"/>
    <property type="molecule type" value="Genomic_DNA"/>
</dbReference>
<dbReference type="RefSeq" id="WP_011888280.1">
    <property type="nucleotide sequence ID" value="NC_009328.1"/>
</dbReference>
<dbReference type="SMR" id="A4IT42"/>
<dbReference type="KEGG" id="gtn:GTNG_3151"/>
<dbReference type="eggNOG" id="COG0119">
    <property type="taxonomic scope" value="Bacteria"/>
</dbReference>
<dbReference type="HOGENOM" id="CLU_049173_0_0_9"/>
<dbReference type="Proteomes" id="UP000001578">
    <property type="component" value="Chromosome"/>
</dbReference>
<dbReference type="GO" id="GO:0003852">
    <property type="term" value="F:2-isopropylmalate synthase activity"/>
    <property type="evidence" value="ECO:0007669"/>
    <property type="project" value="TreeGrafter"/>
</dbReference>
<dbReference type="GO" id="GO:0008701">
    <property type="term" value="F:4-hydroxy-2-oxovalerate aldolase activity"/>
    <property type="evidence" value="ECO:0007669"/>
    <property type="project" value="UniProtKB-UniRule"/>
</dbReference>
<dbReference type="GO" id="GO:0030145">
    <property type="term" value="F:manganese ion binding"/>
    <property type="evidence" value="ECO:0007669"/>
    <property type="project" value="UniProtKB-UniRule"/>
</dbReference>
<dbReference type="GO" id="GO:0009056">
    <property type="term" value="P:catabolic process"/>
    <property type="evidence" value="ECO:0007669"/>
    <property type="project" value="UniProtKB-KW"/>
</dbReference>
<dbReference type="GO" id="GO:0009098">
    <property type="term" value="P:L-leucine biosynthetic process"/>
    <property type="evidence" value="ECO:0007669"/>
    <property type="project" value="TreeGrafter"/>
</dbReference>
<dbReference type="CDD" id="cd07943">
    <property type="entry name" value="DRE_TIM_HOA"/>
    <property type="match status" value="1"/>
</dbReference>
<dbReference type="Gene3D" id="1.10.8.60">
    <property type="match status" value="1"/>
</dbReference>
<dbReference type="Gene3D" id="3.20.20.70">
    <property type="entry name" value="Aldolase class I"/>
    <property type="match status" value="1"/>
</dbReference>
<dbReference type="HAMAP" id="MF_01656">
    <property type="entry name" value="HOA"/>
    <property type="match status" value="1"/>
</dbReference>
<dbReference type="InterPro" id="IPR050073">
    <property type="entry name" value="2-IPM_HCS-like"/>
</dbReference>
<dbReference type="InterPro" id="IPR017629">
    <property type="entry name" value="4OH_2_O-val_aldolase"/>
</dbReference>
<dbReference type="InterPro" id="IPR013785">
    <property type="entry name" value="Aldolase_TIM"/>
</dbReference>
<dbReference type="InterPro" id="IPR012425">
    <property type="entry name" value="DmpG_comm"/>
</dbReference>
<dbReference type="InterPro" id="IPR035685">
    <property type="entry name" value="DRE_TIM_HOA"/>
</dbReference>
<dbReference type="InterPro" id="IPR000891">
    <property type="entry name" value="PYR_CT"/>
</dbReference>
<dbReference type="NCBIfam" id="TIGR03217">
    <property type="entry name" value="4OH_2_O_val_ald"/>
    <property type="match status" value="1"/>
</dbReference>
<dbReference type="NCBIfam" id="NF006049">
    <property type="entry name" value="PRK08195.1"/>
    <property type="match status" value="1"/>
</dbReference>
<dbReference type="PANTHER" id="PTHR10277:SF9">
    <property type="entry name" value="2-ISOPROPYLMALATE SYNTHASE 1, CHLOROPLASTIC-RELATED"/>
    <property type="match status" value="1"/>
</dbReference>
<dbReference type="PANTHER" id="PTHR10277">
    <property type="entry name" value="HOMOCITRATE SYNTHASE-RELATED"/>
    <property type="match status" value="1"/>
</dbReference>
<dbReference type="Pfam" id="PF07836">
    <property type="entry name" value="DmpG_comm"/>
    <property type="match status" value="1"/>
</dbReference>
<dbReference type="Pfam" id="PF00682">
    <property type="entry name" value="HMGL-like"/>
    <property type="match status" value="1"/>
</dbReference>
<dbReference type="SUPFAM" id="SSF51569">
    <property type="entry name" value="Aldolase"/>
    <property type="match status" value="1"/>
</dbReference>
<dbReference type="SUPFAM" id="SSF89000">
    <property type="entry name" value="post-HMGL domain-like"/>
    <property type="match status" value="1"/>
</dbReference>
<dbReference type="PROSITE" id="PS50991">
    <property type="entry name" value="PYR_CT"/>
    <property type="match status" value="1"/>
</dbReference>
<keyword id="KW-0058">Aromatic hydrocarbons catabolism</keyword>
<keyword id="KW-0456">Lyase</keyword>
<keyword id="KW-0464">Manganese</keyword>
<keyword id="KW-0479">Metal-binding</keyword>
<reference key="1">
    <citation type="journal article" date="2007" name="Proc. Natl. Acad. Sci. U.S.A.">
        <title>Genome and proteome of long-chain alkane degrading Geobacillus thermodenitrificans NG80-2 isolated from a deep-subsurface oil reservoir.</title>
        <authorList>
            <person name="Feng L."/>
            <person name="Wang W."/>
            <person name="Cheng J."/>
            <person name="Ren Y."/>
            <person name="Zhao G."/>
            <person name="Gao C."/>
            <person name="Tang Y."/>
            <person name="Liu X."/>
            <person name="Han W."/>
            <person name="Peng X."/>
            <person name="Liu R."/>
            <person name="Wang L."/>
        </authorList>
    </citation>
    <scope>NUCLEOTIDE SEQUENCE [LARGE SCALE GENOMIC DNA]</scope>
    <source>
        <strain>NG80-2</strain>
    </source>
</reference>
<comment type="catalytic activity">
    <reaction evidence="1">
        <text>(S)-4-hydroxy-2-oxopentanoate = acetaldehyde + pyruvate</text>
        <dbReference type="Rhea" id="RHEA:22624"/>
        <dbReference type="ChEBI" id="CHEBI:15343"/>
        <dbReference type="ChEBI" id="CHEBI:15361"/>
        <dbReference type="ChEBI" id="CHEBI:73143"/>
        <dbReference type="EC" id="4.1.3.39"/>
    </reaction>
</comment>
<comment type="similarity">
    <text evidence="1">Belongs to the 4-hydroxy-2-oxovalerate aldolase family.</text>
</comment>
<sequence>MSSERDIWITEVALRDGSHAINHQYTVEQVVSVAQALDEANVPYIEVSHGDGLAGSSLQYGLSRTDEMELIEAAVSVCKKAKIAVLLLPGIGTIRELDAAAKRGVKMVRIATHVTEADISAQHITRAKELGLEAVGFLMMSHMASTEKLVEQAKLMESYGADVVYVVDSAGALLPHEVTERIRALKQSLGIEIGFHGHNNLSLAMANTLAAIQEGATRIDGSVRCLGAGAGNTQTEVLVAVLDRIGLKTGVDLYKMMDLAEEIVAPILQVPQEITRDSLILGYAGVYSSFRLHAERAAKRFGVDSRDILVELGKRKVVGGQEDMIIDIAAEIASKKTATGAR</sequence>
<name>HOA_GEOTN</name>
<organism>
    <name type="scientific">Geobacillus thermodenitrificans (strain NG80-2)</name>
    <dbReference type="NCBI Taxonomy" id="420246"/>
    <lineage>
        <taxon>Bacteria</taxon>
        <taxon>Bacillati</taxon>
        <taxon>Bacillota</taxon>
        <taxon>Bacilli</taxon>
        <taxon>Bacillales</taxon>
        <taxon>Anoxybacillaceae</taxon>
        <taxon>Geobacillus</taxon>
    </lineage>
</organism>
<proteinExistence type="inferred from homology"/>
<protein>
    <recommendedName>
        <fullName evidence="1">4-hydroxy-2-oxovalerate aldolase</fullName>
        <shortName evidence="1">HOA</shortName>
        <ecNumber evidence="1">4.1.3.39</ecNumber>
    </recommendedName>
    <alternativeName>
        <fullName evidence="1">4-hydroxy-2-keto-pentanoic acid aldolase</fullName>
    </alternativeName>
    <alternativeName>
        <fullName evidence="1">4-hydroxy-2-oxopentanoate aldolase</fullName>
    </alternativeName>
</protein>
<evidence type="ECO:0000255" key="1">
    <source>
        <dbReference type="HAMAP-Rule" id="MF_01656"/>
    </source>
</evidence>
<feature type="chain" id="PRO_0000387836" description="4-hydroxy-2-oxovalerate aldolase">
    <location>
        <begin position="1"/>
        <end position="342"/>
    </location>
</feature>
<feature type="domain" description="Pyruvate carboxyltransferase" evidence="1">
    <location>
        <begin position="7"/>
        <end position="257"/>
    </location>
</feature>
<feature type="active site" description="Proton acceptor" evidence="1">
    <location>
        <position position="19"/>
    </location>
</feature>
<feature type="binding site" evidence="1">
    <location>
        <begin position="15"/>
        <end position="16"/>
    </location>
    <ligand>
        <name>substrate</name>
    </ligand>
</feature>
<feature type="binding site" evidence="1">
    <location>
        <position position="16"/>
    </location>
    <ligand>
        <name>Mn(2+)</name>
        <dbReference type="ChEBI" id="CHEBI:29035"/>
    </ligand>
</feature>
<feature type="binding site" evidence="1">
    <location>
        <position position="169"/>
    </location>
    <ligand>
        <name>substrate</name>
    </ligand>
</feature>
<feature type="binding site" evidence="1">
    <location>
        <position position="196"/>
    </location>
    <ligand>
        <name>Mn(2+)</name>
        <dbReference type="ChEBI" id="CHEBI:29035"/>
    </ligand>
</feature>
<feature type="binding site" evidence="1">
    <location>
        <position position="196"/>
    </location>
    <ligand>
        <name>substrate</name>
    </ligand>
</feature>
<feature type="binding site" evidence="1">
    <location>
        <position position="198"/>
    </location>
    <ligand>
        <name>Mn(2+)</name>
        <dbReference type="ChEBI" id="CHEBI:29035"/>
    </ligand>
</feature>
<feature type="binding site" evidence="1">
    <location>
        <position position="287"/>
    </location>
    <ligand>
        <name>substrate</name>
    </ligand>
</feature>
<feature type="site" description="Transition state stabilizer" evidence="1">
    <location>
        <position position="15"/>
    </location>
</feature>